<sequence length="545" mass="62734">MNGKRPADPGPARPMKKGKKQVSAEFSDAVTEEILRKQVAEAWSCRTPFSHEAIALDMDPFLHCVIPNFIQSQDFLEGLHKELLSLDFHEKYNDLYKFQQSDDLKNRKEPHISALRKLMFEDFRAWLSKVSGIDLEPTIDMSCAKYEFTDALLCHDDELEGRRIAFILYLVPSWDRDLGGTLDLYDTDEHLQPKQIVKSLIPSWNKLVFFEVSPVSFHQVSEVLSEETSRLSISGWFYGPSLTRPPTYFEPPIPRNPHIPQDHEILYEWINPAYLEMDYQMQIQEEFEERSEILLKEFLKPEKFAEVCEALEKGDVEWKSHGPPNKRFYEKAEENNLPDVLKECMGLFRSEALFLLLSNLTGLKLHFLAPSEDDETEEKGEGETASAAAGTEEGTSRRPSGPENNQVAAGSHSQENGEQADPEAQEEEAKKESSVPMCQGELRRWKTGHYTLVHDNTKTEFALDLFLYCGCEGWEPEYGGFTSYIAKGEDEELLIVNPENNSLALVYRDRETLRFVKHINHRSLEQSKAFPSRSGFWDFAFIYYE</sequence>
<accession>Q3U0K8</accession>
<accession>Q3TLS5</accession>
<accession>Q3TPR4</accession>
<accession>Q80TB3</accession>
<accession>Q8CFR6</accession>
<name>OGFD1_MOUSE</name>
<comment type="function">
    <text evidence="2">Prolyl 3-hydroxylase that catalyzes 3-hydroxylation of 'Pro-62' of small ribosomal subunit uS12 (RPS23), thereby regulating protein translation termination efficiency. Involved in stress granule formation.</text>
</comment>
<comment type="catalytic activity">
    <reaction evidence="2">
        <text>[ribosomal protein uS12]-L-proline + 2-oxoglutarate + O2 = [ribosomal protein uS12]-(3S)-3-hydroxy-L-proline + succinate + CO2</text>
        <dbReference type="Rhea" id="RHEA:54156"/>
        <dbReference type="Rhea" id="RHEA-COMP:13816"/>
        <dbReference type="Rhea" id="RHEA-COMP:13818"/>
        <dbReference type="ChEBI" id="CHEBI:15379"/>
        <dbReference type="ChEBI" id="CHEBI:16526"/>
        <dbReference type="ChEBI" id="CHEBI:16810"/>
        <dbReference type="ChEBI" id="CHEBI:30031"/>
        <dbReference type="ChEBI" id="CHEBI:50342"/>
        <dbReference type="ChEBI" id="CHEBI:85428"/>
    </reaction>
</comment>
<comment type="cofactor">
    <cofactor evidence="3">
        <name>Fe(2+)</name>
        <dbReference type="ChEBI" id="CHEBI:29033"/>
    </cofactor>
    <text evidence="3">Binds 1 Fe(2+) ion per subunit.</text>
</comment>
<comment type="cofactor">
    <cofactor evidence="2">
        <name>L-ascorbate</name>
        <dbReference type="ChEBI" id="CHEBI:38290"/>
    </cofactor>
</comment>
<comment type="subunit">
    <text evidence="2">Monomer.</text>
</comment>
<comment type="subcellular location">
    <subcellularLocation>
        <location evidence="2">Cytoplasm</location>
    </subcellularLocation>
    <subcellularLocation>
        <location evidence="2">Nucleus</location>
    </subcellularLocation>
</comment>
<comment type="alternative products">
    <event type="alternative splicing"/>
    <isoform>
        <id>Q3U0K8-1</id>
        <name>1</name>
        <sequence type="displayed"/>
    </isoform>
    <isoform>
        <id>Q3U0K8-2</id>
        <name>2</name>
        <sequence type="described" ref="VSP_025854"/>
    </isoform>
    <isoform>
        <id>Q3U0K8-3</id>
        <name>3</name>
        <sequence type="described" ref="VSP_025853"/>
    </isoform>
</comment>
<comment type="similarity">
    <text evidence="8">Belongs to the TPA1 family.</text>
</comment>
<comment type="caution">
    <text evidence="8">Contains Thr-228 instead of the expected predicted active site Lys.</text>
</comment>
<comment type="sequence caution" evidence="8">
    <conflict type="erroneous initiation">
        <sequence resource="EMBL-CDS" id="AAH40267"/>
    </conflict>
</comment>
<proteinExistence type="evidence at protein level"/>
<keyword id="KW-0025">Alternative splicing</keyword>
<keyword id="KW-0963">Cytoplasm</keyword>
<keyword id="KW-0223">Dioxygenase</keyword>
<keyword id="KW-0408">Iron</keyword>
<keyword id="KW-0479">Metal-binding</keyword>
<keyword id="KW-0539">Nucleus</keyword>
<keyword id="KW-0560">Oxidoreductase</keyword>
<keyword id="KW-1185">Reference proteome</keyword>
<keyword id="KW-0847">Vitamin C</keyword>
<reference key="1">
    <citation type="journal article" date="2005" name="Science">
        <title>The transcriptional landscape of the mammalian genome.</title>
        <authorList>
            <person name="Carninci P."/>
            <person name="Kasukawa T."/>
            <person name="Katayama S."/>
            <person name="Gough J."/>
            <person name="Frith M.C."/>
            <person name="Maeda N."/>
            <person name="Oyama R."/>
            <person name="Ravasi T."/>
            <person name="Lenhard B."/>
            <person name="Wells C."/>
            <person name="Kodzius R."/>
            <person name="Shimokawa K."/>
            <person name="Bajic V.B."/>
            <person name="Brenner S.E."/>
            <person name="Batalov S."/>
            <person name="Forrest A.R."/>
            <person name="Zavolan M."/>
            <person name="Davis M.J."/>
            <person name="Wilming L.G."/>
            <person name="Aidinis V."/>
            <person name="Allen J.E."/>
            <person name="Ambesi-Impiombato A."/>
            <person name="Apweiler R."/>
            <person name="Aturaliya R.N."/>
            <person name="Bailey T.L."/>
            <person name="Bansal M."/>
            <person name="Baxter L."/>
            <person name="Beisel K.W."/>
            <person name="Bersano T."/>
            <person name="Bono H."/>
            <person name="Chalk A.M."/>
            <person name="Chiu K.P."/>
            <person name="Choudhary V."/>
            <person name="Christoffels A."/>
            <person name="Clutterbuck D.R."/>
            <person name="Crowe M.L."/>
            <person name="Dalla E."/>
            <person name="Dalrymple B.P."/>
            <person name="de Bono B."/>
            <person name="Della Gatta G."/>
            <person name="di Bernardo D."/>
            <person name="Down T."/>
            <person name="Engstrom P."/>
            <person name="Fagiolini M."/>
            <person name="Faulkner G."/>
            <person name="Fletcher C.F."/>
            <person name="Fukushima T."/>
            <person name="Furuno M."/>
            <person name="Futaki S."/>
            <person name="Gariboldi M."/>
            <person name="Georgii-Hemming P."/>
            <person name="Gingeras T.R."/>
            <person name="Gojobori T."/>
            <person name="Green R.E."/>
            <person name="Gustincich S."/>
            <person name="Harbers M."/>
            <person name="Hayashi Y."/>
            <person name="Hensch T.K."/>
            <person name="Hirokawa N."/>
            <person name="Hill D."/>
            <person name="Huminiecki L."/>
            <person name="Iacono M."/>
            <person name="Ikeo K."/>
            <person name="Iwama A."/>
            <person name="Ishikawa T."/>
            <person name="Jakt M."/>
            <person name="Kanapin A."/>
            <person name="Katoh M."/>
            <person name="Kawasawa Y."/>
            <person name="Kelso J."/>
            <person name="Kitamura H."/>
            <person name="Kitano H."/>
            <person name="Kollias G."/>
            <person name="Krishnan S.P."/>
            <person name="Kruger A."/>
            <person name="Kummerfeld S.K."/>
            <person name="Kurochkin I.V."/>
            <person name="Lareau L.F."/>
            <person name="Lazarevic D."/>
            <person name="Lipovich L."/>
            <person name="Liu J."/>
            <person name="Liuni S."/>
            <person name="McWilliam S."/>
            <person name="Madan Babu M."/>
            <person name="Madera M."/>
            <person name="Marchionni L."/>
            <person name="Matsuda H."/>
            <person name="Matsuzawa S."/>
            <person name="Miki H."/>
            <person name="Mignone F."/>
            <person name="Miyake S."/>
            <person name="Morris K."/>
            <person name="Mottagui-Tabar S."/>
            <person name="Mulder N."/>
            <person name="Nakano N."/>
            <person name="Nakauchi H."/>
            <person name="Ng P."/>
            <person name="Nilsson R."/>
            <person name="Nishiguchi S."/>
            <person name="Nishikawa S."/>
            <person name="Nori F."/>
            <person name="Ohara O."/>
            <person name="Okazaki Y."/>
            <person name="Orlando V."/>
            <person name="Pang K.C."/>
            <person name="Pavan W.J."/>
            <person name="Pavesi G."/>
            <person name="Pesole G."/>
            <person name="Petrovsky N."/>
            <person name="Piazza S."/>
            <person name="Reed J."/>
            <person name="Reid J.F."/>
            <person name="Ring B.Z."/>
            <person name="Ringwald M."/>
            <person name="Rost B."/>
            <person name="Ruan Y."/>
            <person name="Salzberg S.L."/>
            <person name="Sandelin A."/>
            <person name="Schneider C."/>
            <person name="Schoenbach C."/>
            <person name="Sekiguchi K."/>
            <person name="Semple C.A."/>
            <person name="Seno S."/>
            <person name="Sessa L."/>
            <person name="Sheng Y."/>
            <person name="Shibata Y."/>
            <person name="Shimada H."/>
            <person name="Shimada K."/>
            <person name="Silva D."/>
            <person name="Sinclair B."/>
            <person name="Sperling S."/>
            <person name="Stupka E."/>
            <person name="Sugiura K."/>
            <person name="Sultana R."/>
            <person name="Takenaka Y."/>
            <person name="Taki K."/>
            <person name="Tammoja K."/>
            <person name="Tan S.L."/>
            <person name="Tang S."/>
            <person name="Taylor M.S."/>
            <person name="Tegner J."/>
            <person name="Teichmann S.A."/>
            <person name="Ueda H.R."/>
            <person name="van Nimwegen E."/>
            <person name="Verardo R."/>
            <person name="Wei C.L."/>
            <person name="Yagi K."/>
            <person name="Yamanishi H."/>
            <person name="Zabarovsky E."/>
            <person name="Zhu S."/>
            <person name="Zimmer A."/>
            <person name="Hide W."/>
            <person name="Bult C."/>
            <person name="Grimmond S.M."/>
            <person name="Teasdale R.D."/>
            <person name="Liu E.T."/>
            <person name="Brusic V."/>
            <person name="Quackenbush J."/>
            <person name="Wahlestedt C."/>
            <person name="Mattick J.S."/>
            <person name="Hume D.A."/>
            <person name="Kai C."/>
            <person name="Sasaki D."/>
            <person name="Tomaru Y."/>
            <person name="Fukuda S."/>
            <person name="Kanamori-Katayama M."/>
            <person name="Suzuki M."/>
            <person name="Aoki J."/>
            <person name="Arakawa T."/>
            <person name="Iida J."/>
            <person name="Imamura K."/>
            <person name="Itoh M."/>
            <person name="Kato T."/>
            <person name="Kawaji H."/>
            <person name="Kawagashira N."/>
            <person name="Kawashima T."/>
            <person name="Kojima M."/>
            <person name="Kondo S."/>
            <person name="Konno H."/>
            <person name="Nakano K."/>
            <person name="Ninomiya N."/>
            <person name="Nishio T."/>
            <person name="Okada M."/>
            <person name="Plessy C."/>
            <person name="Shibata K."/>
            <person name="Shiraki T."/>
            <person name="Suzuki S."/>
            <person name="Tagami M."/>
            <person name="Waki K."/>
            <person name="Watahiki A."/>
            <person name="Okamura-Oho Y."/>
            <person name="Suzuki H."/>
            <person name="Kawai J."/>
            <person name="Hayashizaki Y."/>
        </authorList>
    </citation>
    <scope>NUCLEOTIDE SEQUENCE [LARGE SCALE MRNA] (ISOFORM 1)</scope>
    <scope>NUCLEOTIDE SEQUENCE [LARGE SCALE MRNA] OF 9-545 (ISOFORM 2)</scope>
    <source>
        <strain>C57BL/6J</strain>
        <strain>NOD</strain>
        <tissue>Hippocampus</tissue>
        <tissue>Mammary gland</tissue>
        <tissue>Spleen</tissue>
    </source>
</reference>
<reference key="2">
    <citation type="journal article" date="2004" name="Genome Res.">
        <title>The status, quality, and expansion of the NIH full-length cDNA project: the Mammalian Gene Collection (MGC).</title>
        <authorList>
            <consortium name="The MGC Project Team"/>
        </authorList>
    </citation>
    <scope>NUCLEOTIDE SEQUENCE [LARGE SCALE MRNA] (ISOFORM 2)</scope>
    <source>
        <tissue>Eye</tissue>
    </source>
</reference>
<reference key="3">
    <citation type="journal article" date="2003" name="DNA Res.">
        <title>Prediction of the coding sequences of mouse homologues of KIAA gene: II. The complete nucleotide sequences of 400 mouse KIAA-homologous cDNAs identified by screening of terminal sequences of cDNA clones randomly sampled from size-fractionated libraries.</title>
        <authorList>
            <person name="Okazaki N."/>
            <person name="Kikuno R."/>
            <person name="Ohara R."/>
            <person name="Inamoto S."/>
            <person name="Aizawa H."/>
            <person name="Yuasa S."/>
            <person name="Nakajima D."/>
            <person name="Nagase T."/>
            <person name="Ohara O."/>
            <person name="Koga H."/>
        </authorList>
    </citation>
    <scope>NUCLEOTIDE SEQUENCE [LARGE SCALE MRNA] OF 2-545 (ISOFORM 3)</scope>
    <source>
        <tissue>Brain</tissue>
    </source>
</reference>
<reference key="4">
    <citation type="journal article" date="2010" name="Cell">
        <title>A tissue-specific atlas of mouse protein phosphorylation and expression.</title>
        <authorList>
            <person name="Huttlin E.L."/>
            <person name="Jedrychowski M.P."/>
            <person name="Elias J.E."/>
            <person name="Goswami T."/>
            <person name="Rad R."/>
            <person name="Beausoleil S.A."/>
            <person name="Villen J."/>
            <person name="Haas W."/>
            <person name="Sowa M.E."/>
            <person name="Gygi S.P."/>
        </authorList>
    </citation>
    <scope>IDENTIFICATION BY MASS SPECTROMETRY [LARGE SCALE ANALYSIS]</scope>
    <source>
        <tissue>Brain</tissue>
    </source>
</reference>
<evidence type="ECO:0000250" key="1">
    <source>
        <dbReference type="UniProtKB" id="P40032"/>
    </source>
</evidence>
<evidence type="ECO:0000250" key="2">
    <source>
        <dbReference type="UniProtKB" id="Q8N543"/>
    </source>
</evidence>
<evidence type="ECO:0000255" key="3">
    <source>
        <dbReference type="PROSITE-ProRule" id="PRU00805"/>
    </source>
</evidence>
<evidence type="ECO:0000256" key="4">
    <source>
        <dbReference type="SAM" id="MobiDB-lite"/>
    </source>
</evidence>
<evidence type="ECO:0000303" key="5">
    <source>
    </source>
</evidence>
<evidence type="ECO:0000303" key="6">
    <source>
    </source>
</evidence>
<evidence type="ECO:0000303" key="7">
    <source>
    </source>
</evidence>
<evidence type="ECO:0000305" key="8"/>
<dbReference type="EC" id="1.14.11.-"/>
<dbReference type="EMBL" id="AK156765">
    <property type="protein sequence ID" value="BAE33844.1"/>
    <property type="molecule type" value="mRNA"/>
</dbReference>
<dbReference type="EMBL" id="AK164189">
    <property type="protein sequence ID" value="BAE37671.1"/>
    <property type="molecule type" value="mRNA"/>
</dbReference>
<dbReference type="EMBL" id="AK166343">
    <property type="protein sequence ID" value="BAE38717.1"/>
    <property type="molecule type" value="mRNA"/>
</dbReference>
<dbReference type="EMBL" id="BC040267">
    <property type="protein sequence ID" value="AAH40267.1"/>
    <property type="status" value="ALT_INIT"/>
    <property type="molecule type" value="mRNA"/>
</dbReference>
<dbReference type="EMBL" id="AK122532">
    <property type="protein sequence ID" value="BAC65814.1"/>
    <property type="molecule type" value="mRNA"/>
</dbReference>
<dbReference type="CCDS" id="CCDS22535.2">
    <molecule id="Q3U0K8-1"/>
</dbReference>
<dbReference type="CCDS" id="CCDS52636.1">
    <molecule id="Q3U0K8-2"/>
</dbReference>
<dbReference type="RefSeq" id="NP_001087226.1">
    <molecule id="Q3U0K8-2"/>
    <property type="nucleotide sequence ID" value="NM_001093757.2"/>
</dbReference>
<dbReference type="RefSeq" id="NP_808435.3">
    <molecule id="Q3U0K8-1"/>
    <property type="nucleotide sequence ID" value="NM_177767.4"/>
</dbReference>
<dbReference type="SMR" id="Q3U0K8"/>
<dbReference type="BioGRID" id="234757">
    <property type="interactions" value="14"/>
</dbReference>
<dbReference type="FunCoup" id="Q3U0K8">
    <property type="interactions" value="3057"/>
</dbReference>
<dbReference type="STRING" id="10090.ENSMUSP00000105183"/>
<dbReference type="iPTMnet" id="Q3U0K8"/>
<dbReference type="PhosphoSitePlus" id="Q3U0K8"/>
<dbReference type="PaxDb" id="10090-ENSMUSP00000105183"/>
<dbReference type="PeptideAtlas" id="Q3U0K8"/>
<dbReference type="ProteomicsDB" id="293927">
    <molecule id="Q3U0K8-1"/>
</dbReference>
<dbReference type="ProteomicsDB" id="293928">
    <molecule id="Q3U0K8-2"/>
</dbReference>
<dbReference type="ProteomicsDB" id="293929">
    <molecule id="Q3U0K8-3"/>
</dbReference>
<dbReference type="Pumba" id="Q3U0K8"/>
<dbReference type="Antibodypedia" id="756">
    <property type="antibodies" value="213 antibodies from 27 providers"/>
</dbReference>
<dbReference type="DNASU" id="270086"/>
<dbReference type="Ensembl" id="ENSMUST00000093301.9">
    <molecule id="Q3U0K8-2"/>
    <property type="protein sequence ID" value="ENSMUSP00000090991.3"/>
    <property type="gene ID" value="ENSMUSG00000033009.16"/>
</dbReference>
<dbReference type="Ensembl" id="ENSMUST00000109556.9">
    <molecule id="Q3U0K8-1"/>
    <property type="protein sequence ID" value="ENSMUSP00000105183.3"/>
    <property type="gene ID" value="ENSMUSG00000033009.16"/>
</dbReference>
<dbReference type="GeneID" id="270086"/>
<dbReference type="KEGG" id="mmu:270086"/>
<dbReference type="UCSC" id="uc009mvq.1">
    <molecule id="Q3U0K8-1"/>
    <property type="organism name" value="mouse"/>
</dbReference>
<dbReference type="UCSC" id="uc009mvr.1">
    <molecule id="Q3U0K8-2"/>
    <property type="organism name" value="mouse"/>
</dbReference>
<dbReference type="UCSC" id="uc012gim.1">
    <molecule id="Q3U0K8-3"/>
    <property type="organism name" value="mouse"/>
</dbReference>
<dbReference type="AGR" id="MGI:2442978"/>
<dbReference type="CTD" id="55239"/>
<dbReference type="MGI" id="MGI:2442978">
    <property type="gene designation" value="Ogfod1"/>
</dbReference>
<dbReference type="VEuPathDB" id="HostDB:ENSMUSG00000033009"/>
<dbReference type="eggNOG" id="KOG3844">
    <property type="taxonomic scope" value="Eukaryota"/>
</dbReference>
<dbReference type="GeneTree" id="ENSGT00390000002349"/>
<dbReference type="InParanoid" id="Q3U0K8"/>
<dbReference type="OMA" id="HDHEILY"/>
<dbReference type="OrthoDB" id="430522at2759"/>
<dbReference type="PhylomeDB" id="Q3U0K8"/>
<dbReference type="TreeFam" id="TF105920"/>
<dbReference type="Reactome" id="R-MMU-9629569">
    <property type="pathway name" value="Protein hydroxylation"/>
</dbReference>
<dbReference type="BioGRID-ORCS" id="270086">
    <property type="hits" value="7 hits in 77 CRISPR screens"/>
</dbReference>
<dbReference type="ChiTaRS" id="Ogfod1">
    <property type="organism name" value="mouse"/>
</dbReference>
<dbReference type="PRO" id="PR:Q3U0K8"/>
<dbReference type="Proteomes" id="UP000000589">
    <property type="component" value="Chromosome 8"/>
</dbReference>
<dbReference type="RNAct" id="Q3U0K8">
    <property type="molecule type" value="protein"/>
</dbReference>
<dbReference type="Bgee" id="ENSMUSG00000033009">
    <property type="expression patterns" value="Expressed in ventromedial nucleus of hypothalamus and 228 other cell types or tissues"/>
</dbReference>
<dbReference type="ExpressionAtlas" id="Q3U0K8">
    <property type="expression patterns" value="baseline and differential"/>
</dbReference>
<dbReference type="GO" id="GO:0010494">
    <property type="term" value="C:cytoplasmic stress granule"/>
    <property type="evidence" value="ECO:0000250"/>
    <property type="project" value="UniProtKB"/>
</dbReference>
<dbReference type="GO" id="GO:0005829">
    <property type="term" value="C:cytosol"/>
    <property type="evidence" value="ECO:0007669"/>
    <property type="project" value="Ensembl"/>
</dbReference>
<dbReference type="GO" id="GO:0005654">
    <property type="term" value="C:nucleoplasm"/>
    <property type="evidence" value="ECO:0007669"/>
    <property type="project" value="Ensembl"/>
</dbReference>
<dbReference type="GO" id="GO:0005506">
    <property type="term" value="F:iron ion binding"/>
    <property type="evidence" value="ECO:0007669"/>
    <property type="project" value="InterPro"/>
</dbReference>
<dbReference type="GO" id="GO:0031418">
    <property type="term" value="F:L-ascorbic acid binding"/>
    <property type="evidence" value="ECO:0007669"/>
    <property type="project" value="UniProtKB-KW"/>
</dbReference>
<dbReference type="GO" id="GO:0031544">
    <property type="term" value="F:peptidyl-proline 3-dioxygenase activity"/>
    <property type="evidence" value="ECO:0000250"/>
    <property type="project" value="UniProtKB"/>
</dbReference>
<dbReference type="GO" id="GO:0031543">
    <property type="term" value="F:peptidyl-proline dioxygenase activity"/>
    <property type="evidence" value="ECO:0000250"/>
    <property type="project" value="UniProtKB"/>
</dbReference>
<dbReference type="GO" id="GO:0008283">
    <property type="term" value="P:cell population proliferation"/>
    <property type="evidence" value="ECO:0000250"/>
    <property type="project" value="UniProtKB"/>
</dbReference>
<dbReference type="GO" id="GO:0018126">
    <property type="term" value="P:protein hydroxylation"/>
    <property type="evidence" value="ECO:0000250"/>
    <property type="project" value="UniProtKB"/>
</dbReference>
<dbReference type="GO" id="GO:0006449">
    <property type="term" value="P:regulation of translational termination"/>
    <property type="evidence" value="ECO:0000250"/>
    <property type="project" value="UniProtKB"/>
</dbReference>
<dbReference type="GO" id="GO:0034063">
    <property type="term" value="P:stress granule assembly"/>
    <property type="evidence" value="ECO:0000250"/>
    <property type="project" value="UniProtKB"/>
</dbReference>
<dbReference type="FunFam" id="2.60.120.620:FF:000010">
    <property type="entry name" value="Prolyl 3-hydroxylase OGFOD1 isoform 1"/>
    <property type="match status" value="1"/>
</dbReference>
<dbReference type="Gene3D" id="2.60.120.620">
    <property type="entry name" value="q2cbj1_9rhob like domain"/>
    <property type="match status" value="2"/>
</dbReference>
<dbReference type="InterPro" id="IPR005123">
    <property type="entry name" value="Oxoglu/Fe-dep_dioxygenase_dom"/>
</dbReference>
<dbReference type="InterPro" id="IPR019601">
    <property type="entry name" value="Oxoglutarate/Fe-dep_Oase_C"/>
</dbReference>
<dbReference type="InterPro" id="IPR006620">
    <property type="entry name" value="Pro_4_hyd_alph"/>
</dbReference>
<dbReference type="InterPro" id="IPR039558">
    <property type="entry name" value="TPA1/OFD1_N"/>
</dbReference>
<dbReference type="InterPro" id="IPR051842">
    <property type="entry name" value="uS12_prolyl_hydroxylase"/>
</dbReference>
<dbReference type="PANTHER" id="PTHR12117">
    <property type="entry name" value="HISTONE ACETYLTRANSFERASE COMPLEX"/>
    <property type="match status" value="1"/>
</dbReference>
<dbReference type="PANTHER" id="PTHR12117:SF0">
    <property type="entry name" value="PROLYL 3-HYDROXYLASE OGFOD1"/>
    <property type="match status" value="1"/>
</dbReference>
<dbReference type="Pfam" id="PF13661">
    <property type="entry name" value="2OG-FeII_Oxy_4"/>
    <property type="match status" value="1"/>
</dbReference>
<dbReference type="Pfam" id="PF10637">
    <property type="entry name" value="Ofd1_CTDD"/>
    <property type="match status" value="1"/>
</dbReference>
<dbReference type="SMART" id="SM00702">
    <property type="entry name" value="P4Hc"/>
    <property type="match status" value="1"/>
</dbReference>
<dbReference type="PROSITE" id="PS51471">
    <property type="entry name" value="FE2OG_OXY"/>
    <property type="match status" value="1"/>
</dbReference>
<organism>
    <name type="scientific">Mus musculus</name>
    <name type="common">Mouse</name>
    <dbReference type="NCBI Taxonomy" id="10090"/>
    <lineage>
        <taxon>Eukaryota</taxon>
        <taxon>Metazoa</taxon>
        <taxon>Chordata</taxon>
        <taxon>Craniata</taxon>
        <taxon>Vertebrata</taxon>
        <taxon>Euteleostomi</taxon>
        <taxon>Mammalia</taxon>
        <taxon>Eutheria</taxon>
        <taxon>Euarchontoglires</taxon>
        <taxon>Glires</taxon>
        <taxon>Rodentia</taxon>
        <taxon>Myomorpha</taxon>
        <taxon>Muroidea</taxon>
        <taxon>Muridae</taxon>
        <taxon>Murinae</taxon>
        <taxon>Mus</taxon>
        <taxon>Mus</taxon>
    </lineage>
</organism>
<feature type="chain" id="PRO_0000288975" description="Prolyl 3-hydroxylase OGFOD1">
    <location>
        <begin position="1"/>
        <end position="545"/>
    </location>
</feature>
<feature type="domain" description="Fe2OG dioxygenase" evidence="3">
    <location>
        <begin position="137"/>
        <end position="239"/>
    </location>
</feature>
<feature type="region of interest" description="Disordered" evidence="4">
    <location>
        <begin position="1"/>
        <end position="23"/>
    </location>
</feature>
<feature type="region of interest" description="Disordered" evidence="4">
    <location>
        <begin position="371"/>
        <end position="437"/>
    </location>
</feature>
<feature type="compositionally biased region" description="Acidic residues" evidence="4">
    <location>
        <begin position="371"/>
        <end position="380"/>
    </location>
</feature>
<feature type="compositionally biased region" description="Low complexity" evidence="4">
    <location>
        <begin position="383"/>
        <end position="393"/>
    </location>
</feature>
<feature type="compositionally biased region" description="Polar residues" evidence="4">
    <location>
        <begin position="402"/>
        <end position="417"/>
    </location>
</feature>
<feature type="binding site" evidence="1 3">
    <location>
        <position position="155"/>
    </location>
    <ligand>
        <name>Fe cation</name>
        <dbReference type="ChEBI" id="CHEBI:24875"/>
    </ligand>
</feature>
<feature type="binding site" evidence="3">
    <location>
        <position position="157"/>
    </location>
    <ligand>
        <name>Fe cation</name>
        <dbReference type="ChEBI" id="CHEBI:24875"/>
    </ligand>
</feature>
<feature type="binding site" evidence="1">
    <location>
        <position position="169"/>
    </location>
    <ligand>
        <name>2-oxoglutarate</name>
        <dbReference type="ChEBI" id="CHEBI:16810"/>
    </ligand>
</feature>
<feature type="binding site" evidence="1 3">
    <location>
        <position position="218"/>
    </location>
    <ligand>
        <name>Fe cation</name>
        <dbReference type="ChEBI" id="CHEBI:24875"/>
    </ligand>
</feature>
<feature type="binding site" evidence="1 3">
    <location>
        <position position="230"/>
    </location>
    <ligand>
        <name>2-oxoglutarate</name>
        <dbReference type="ChEBI" id="CHEBI:16810"/>
    </ligand>
</feature>
<feature type="splice variant" id="VSP_025853" description="In isoform 3." evidence="5">
    <location>
        <position position="52"/>
    </location>
</feature>
<feature type="splice variant" id="VSP_025854" description="In isoform 2." evidence="6 7">
    <location>
        <begin position="220"/>
        <end position="262"/>
    </location>
</feature>
<feature type="sequence conflict" description="In Ref. 1; BAE38717." evidence="8" ref="1">
    <original>A</original>
    <variation>V</variation>
    <location>
        <position position="12"/>
    </location>
</feature>
<feature type="sequence conflict" description="In Ref. 1; BAE38717." evidence="8" ref="1">
    <original>P</original>
    <variation>S</variation>
    <location>
        <position position="48"/>
    </location>
</feature>
<feature type="sequence conflict" description="In Ref. 1; BAE38717." evidence="8" ref="1">
    <original>M</original>
    <variation>V</variation>
    <location>
        <position position="58"/>
    </location>
</feature>
<feature type="sequence conflict" description="In Ref. 1; BAE38717." evidence="8" ref="1">
    <original>H</original>
    <variation>Q</variation>
    <location>
        <position position="80"/>
    </location>
</feature>
<feature type="sequence conflict" description="In Ref. 1; BAE38717." evidence="8" ref="1">
    <original>R</original>
    <variation>Q</variation>
    <location>
        <position position="397"/>
    </location>
</feature>
<protein>
    <recommendedName>
        <fullName>Prolyl 3-hydroxylase OGFOD1</fullName>
        <ecNumber>1.14.11.-</ecNumber>
    </recommendedName>
    <alternativeName>
        <fullName>2-oxoglutarate and iron-dependent oxygenase domain-containing protein 1</fullName>
    </alternativeName>
    <alternativeName>
        <fullName>uS12 prolyl 3-hydroxylase</fullName>
    </alternativeName>
</protein>
<gene>
    <name type="primary">Ogfod1</name>
    <name type="synonym">Kiaa1612</name>
</gene>